<gene>
    <name evidence="1" type="primary">rsmG</name>
    <name type="ordered locus">PMT_1496</name>
</gene>
<proteinExistence type="inferred from homology"/>
<accession>Q7V5Q2</accession>
<organism>
    <name type="scientific">Prochlorococcus marinus (strain MIT 9313)</name>
    <dbReference type="NCBI Taxonomy" id="74547"/>
    <lineage>
        <taxon>Bacteria</taxon>
        <taxon>Bacillati</taxon>
        <taxon>Cyanobacteriota</taxon>
        <taxon>Cyanophyceae</taxon>
        <taxon>Synechococcales</taxon>
        <taxon>Prochlorococcaceae</taxon>
        <taxon>Prochlorococcus</taxon>
    </lineage>
</organism>
<comment type="function">
    <text evidence="1">Specifically methylates the N7 position of a guanine in 16S rRNA.</text>
</comment>
<comment type="subcellular location">
    <subcellularLocation>
        <location evidence="1">Cytoplasm</location>
    </subcellularLocation>
</comment>
<comment type="similarity">
    <text evidence="1">Belongs to the methyltransferase superfamily. RNA methyltransferase RsmG family.</text>
</comment>
<evidence type="ECO:0000255" key="1">
    <source>
        <dbReference type="HAMAP-Rule" id="MF_00074"/>
    </source>
</evidence>
<sequence length="247" mass="27077">MSNQACFSNPGPELWNALGWHPSSEQLEQMIALQALLRQWNARVNLTRLVEGGDYWIMQVFDSLWPLQSELQNAQQPRRCIDIGSGGGFPGLVLAIALPGARITLVDSVGRKTAALKAMAAKLGLTSRVTVRSERAEFTGQDPCCRGLFDLAMARAVSTAPVVAEYLVPLLKPSGEALLFRGHWSPNDAKDLAKALRLLQADLIKMERRELPDNRGVRHQLRLRATLPCPATFPRPIGVPAKNPLGS</sequence>
<dbReference type="EC" id="2.1.1.-" evidence="1"/>
<dbReference type="EMBL" id="BX548175">
    <property type="protein sequence ID" value="CAE21671.1"/>
    <property type="molecule type" value="Genomic_DNA"/>
</dbReference>
<dbReference type="RefSeq" id="WP_011130864.1">
    <property type="nucleotide sequence ID" value="NC_005071.1"/>
</dbReference>
<dbReference type="SMR" id="Q7V5Q2"/>
<dbReference type="KEGG" id="pmt:PMT_1496"/>
<dbReference type="eggNOG" id="COG0357">
    <property type="taxonomic scope" value="Bacteria"/>
</dbReference>
<dbReference type="HOGENOM" id="CLU_065341_0_2_3"/>
<dbReference type="OrthoDB" id="9808773at2"/>
<dbReference type="Proteomes" id="UP000001423">
    <property type="component" value="Chromosome"/>
</dbReference>
<dbReference type="GO" id="GO:0005829">
    <property type="term" value="C:cytosol"/>
    <property type="evidence" value="ECO:0007669"/>
    <property type="project" value="TreeGrafter"/>
</dbReference>
<dbReference type="GO" id="GO:0070043">
    <property type="term" value="F:rRNA (guanine-N7-)-methyltransferase activity"/>
    <property type="evidence" value="ECO:0007669"/>
    <property type="project" value="UniProtKB-UniRule"/>
</dbReference>
<dbReference type="Gene3D" id="3.40.50.150">
    <property type="entry name" value="Vaccinia Virus protein VP39"/>
    <property type="match status" value="1"/>
</dbReference>
<dbReference type="HAMAP" id="MF_00074">
    <property type="entry name" value="16SrRNA_methyltr_G"/>
    <property type="match status" value="1"/>
</dbReference>
<dbReference type="InterPro" id="IPR003682">
    <property type="entry name" value="rRNA_ssu_MeTfrase_G"/>
</dbReference>
<dbReference type="InterPro" id="IPR029063">
    <property type="entry name" value="SAM-dependent_MTases_sf"/>
</dbReference>
<dbReference type="NCBIfam" id="TIGR00138">
    <property type="entry name" value="rsmG_gidB"/>
    <property type="match status" value="1"/>
</dbReference>
<dbReference type="PANTHER" id="PTHR31760">
    <property type="entry name" value="S-ADENOSYL-L-METHIONINE-DEPENDENT METHYLTRANSFERASES SUPERFAMILY PROTEIN"/>
    <property type="match status" value="1"/>
</dbReference>
<dbReference type="PANTHER" id="PTHR31760:SF0">
    <property type="entry name" value="S-ADENOSYL-L-METHIONINE-DEPENDENT METHYLTRANSFERASES SUPERFAMILY PROTEIN"/>
    <property type="match status" value="1"/>
</dbReference>
<dbReference type="Pfam" id="PF02527">
    <property type="entry name" value="GidB"/>
    <property type="match status" value="1"/>
</dbReference>
<dbReference type="PIRSF" id="PIRSF003078">
    <property type="entry name" value="GidB"/>
    <property type="match status" value="1"/>
</dbReference>
<dbReference type="SUPFAM" id="SSF53335">
    <property type="entry name" value="S-adenosyl-L-methionine-dependent methyltransferases"/>
    <property type="match status" value="1"/>
</dbReference>
<keyword id="KW-0963">Cytoplasm</keyword>
<keyword id="KW-0489">Methyltransferase</keyword>
<keyword id="KW-1185">Reference proteome</keyword>
<keyword id="KW-0698">rRNA processing</keyword>
<keyword id="KW-0949">S-adenosyl-L-methionine</keyword>
<keyword id="KW-0808">Transferase</keyword>
<reference key="1">
    <citation type="journal article" date="2003" name="Nature">
        <title>Genome divergence in two Prochlorococcus ecotypes reflects oceanic niche differentiation.</title>
        <authorList>
            <person name="Rocap G."/>
            <person name="Larimer F.W."/>
            <person name="Lamerdin J.E."/>
            <person name="Malfatti S."/>
            <person name="Chain P."/>
            <person name="Ahlgren N.A."/>
            <person name="Arellano A."/>
            <person name="Coleman M."/>
            <person name="Hauser L."/>
            <person name="Hess W.R."/>
            <person name="Johnson Z.I."/>
            <person name="Land M.L."/>
            <person name="Lindell D."/>
            <person name="Post A.F."/>
            <person name="Regala W."/>
            <person name="Shah M."/>
            <person name="Shaw S.L."/>
            <person name="Steglich C."/>
            <person name="Sullivan M.B."/>
            <person name="Ting C.S."/>
            <person name="Tolonen A."/>
            <person name="Webb E.A."/>
            <person name="Zinser E.R."/>
            <person name="Chisholm S.W."/>
        </authorList>
    </citation>
    <scope>NUCLEOTIDE SEQUENCE [LARGE SCALE GENOMIC DNA]</scope>
    <source>
        <strain>MIT 9313</strain>
    </source>
</reference>
<protein>
    <recommendedName>
        <fullName evidence="1">Ribosomal RNA small subunit methyltransferase G</fullName>
        <ecNumber evidence="1">2.1.1.-</ecNumber>
    </recommendedName>
    <alternativeName>
        <fullName evidence="1">16S rRNA 7-methylguanosine methyltransferase</fullName>
        <shortName evidence="1">16S rRNA m7G methyltransferase</shortName>
    </alternativeName>
</protein>
<name>RSMG_PROMM</name>
<feature type="chain" id="PRO_0000184303" description="Ribosomal RNA small subunit methyltransferase G">
    <location>
        <begin position="1"/>
        <end position="247"/>
    </location>
</feature>
<feature type="binding site" evidence="1">
    <location>
        <position position="84"/>
    </location>
    <ligand>
        <name>S-adenosyl-L-methionine</name>
        <dbReference type="ChEBI" id="CHEBI:59789"/>
    </ligand>
</feature>
<feature type="binding site" evidence="1">
    <location>
        <position position="89"/>
    </location>
    <ligand>
        <name>S-adenosyl-L-methionine</name>
        <dbReference type="ChEBI" id="CHEBI:59789"/>
    </ligand>
</feature>
<feature type="binding site" evidence="1">
    <location>
        <begin position="136"/>
        <end position="137"/>
    </location>
    <ligand>
        <name>S-adenosyl-L-methionine</name>
        <dbReference type="ChEBI" id="CHEBI:59789"/>
    </ligand>
</feature>
<feature type="binding site" evidence="1">
    <location>
        <position position="155"/>
    </location>
    <ligand>
        <name>S-adenosyl-L-methionine</name>
        <dbReference type="ChEBI" id="CHEBI:59789"/>
    </ligand>
</feature>